<organism>
    <name type="scientific">Mycobacteroides abscessus (strain ATCC 19977 / DSM 44196 / CCUG 20993 / CIP 104536 / JCM 13569 / NCTC 13031 / TMC 1543 / L948)</name>
    <name type="common">Mycobacterium abscessus</name>
    <dbReference type="NCBI Taxonomy" id="561007"/>
    <lineage>
        <taxon>Bacteria</taxon>
        <taxon>Bacillati</taxon>
        <taxon>Actinomycetota</taxon>
        <taxon>Actinomycetes</taxon>
        <taxon>Mycobacteriales</taxon>
        <taxon>Mycobacteriaceae</taxon>
        <taxon>Mycobacteroides</taxon>
        <taxon>Mycobacteroides abscessus</taxon>
    </lineage>
</organism>
<dbReference type="EC" id="4.2.1.96" evidence="1"/>
<dbReference type="EMBL" id="CU458896">
    <property type="protein sequence ID" value="CAM61395.1"/>
    <property type="molecule type" value="Genomic_DNA"/>
</dbReference>
<dbReference type="RefSeq" id="WP_005074197.1">
    <property type="nucleotide sequence ID" value="NZ_MLCG01000002.1"/>
</dbReference>
<dbReference type="SMR" id="B1MLG8"/>
<dbReference type="GeneID" id="93378254"/>
<dbReference type="KEGG" id="mab:MAB_1307c"/>
<dbReference type="Proteomes" id="UP000007137">
    <property type="component" value="Chromosome"/>
</dbReference>
<dbReference type="GO" id="GO:0008124">
    <property type="term" value="F:4-alpha-hydroxytetrahydrobiopterin dehydratase activity"/>
    <property type="evidence" value="ECO:0007669"/>
    <property type="project" value="UniProtKB-UniRule"/>
</dbReference>
<dbReference type="GO" id="GO:0006729">
    <property type="term" value="P:tetrahydrobiopterin biosynthetic process"/>
    <property type="evidence" value="ECO:0007669"/>
    <property type="project" value="InterPro"/>
</dbReference>
<dbReference type="CDD" id="cd00488">
    <property type="entry name" value="PCD_DCoH"/>
    <property type="match status" value="1"/>
</dbReference>
<dbReference type="Gene3D" id="3.30.1360.20">
    <property type="entry name" value="Transcriptional coactivator/pterin dehydratase"/>
    <property type="match status" value="1"/>
</dbReference>
<dbReference type="HAMAP" id="MF_00434">
    <property type="entry name" value="Pterin_4_alpha"/>
    <property type="match status" value="1"/>
</dbReference>
<dbReference type="InterPro" id="IPR036428">
    <property type="entry name" value="PCD_sf"/>
</dbReference>
<dbReference type="InterPro" id="IPR001533">
    <property type="entry name" value="Pterin_deHydtase"/>
</dbReference>
<dbReference type="NCBIfam" id="NF002017">
    <property type="entry name" value="PRK00823.1-2"/>
    <property type="match status" value="1"/>
</dbReference>
<dbReference type="PANTHER" id="PTHR12599">
    <property type="entry name" value="PTERIN-4-ALPHA-CARBINOLAMINE DEHYDRATASE"/>
    <property type="match status" value="1"/>
</dbReference>
<dbReference type="PANTHER" id="PTHR12599:SF0">
    <property type="entry name" value="PTERIN-4-ALPHA-CARBINOLAMINE DEHYDRATASE"/>
    <property type="match status" value="1"/>
</dbReference>
<dbReference type="Pfam" id="PF01329">
    <property type="entry name" value="Pterin_4a"/>
    <property type="match status" value="1"/>
</dbReference>
<dbReference type="SUPFAM" id="SSF55248">
    <property type="entry name" value="PCD-like"/>
    <property type="match status" value="1"/>
</dbReference>
<proteinExistence type="inferred from homology"/>
<keyword id="KW-0456">Lyase</keyword>
<keyword id="KW-1185">Reference proteome</keyword>
<feature type="chain" id="PRO_1000192917" description="Putative pterin-4-alpha-carbinolamine dehydratase">
    <location>
        <begin position="1"/>
        <end position="94"/>
    </location>
</feature>
<gene>
    <name type="ordered locus">MAB_1307c</name>
</gene>
<reference key="1">
    <citation type="journal article" date="2009" name="PLoS ONE">
        <title>Non mycobacterial virulence genes in the genome of the emerging pathogen Mycobacterium abscessus.</title>
        <authorList>
            <person name="Ripoll F."/>
            <person name="Pasek S."/>
            <person name="Schenowitz C."/>
            <person name="Dossat C."/>
            <person name="Barbe V."/>
            <person name="Rottman M."/>
            <person name="Macheras E."/>
            <person name="Heym B."/>
            <person name="Herrmann J.L."/>
            <person name="Daffe M."/>
            <person name="Brosch R."/>
            <person name="Risler J.L."/>
            <person name="Gaillard J.L."/>
        </authorList>
    </citation>
    <scope>NUCLEOTIDE SEQUENCE [LARGE SCALE GENOMIC DNA]</scope>
    <source>
        <strain>ATCC 19977 / DSM 44196 / CCUG 20993 / CIP 104536 / JCM 13569 / NCTC 13031 / TMC 1543 / L948</strain>
    </source>
</reference>
<protein>
    <recommendedName>
        <fullName evidence="1">Putative pterin-4-alpha-carbinolamine dehydratase</fullName>
        <shortName evidence="1">PHS</shortName>
        <ecNumber evidence="1">4.2.1.96</ecNumber>
    </recommendedName>
    <alternativeName>
        <fullName evidence="1">4-alpha-hydroxy-tetrahydropterin dehydratase</fullName>
    </alternativeName>
    <alternativeName>
        <fullName evidence="1">Pterin carbinolamine dehydratase</fullName>
        <shortName evidence="1">PCD</shortName>
    </alternativeName>
</protein>
<evidence type="ECO:0000255" key="1">
    <source>
        <dbReference type="HAMAP-Rule" id="MF_00434"/>
    </source>
</evidence>
<sequence length="94" mass="10340">MALLTDDQINAALAGLPGWTREGDSLRRAVTFDAFLDGIDAVRRIAEHAESVDHHPDIDIRWRTVTFVLSTHSEGGITDKDLALAETIDTQIGR</sequence>
<name>PHS_MYCA9</name>
<accession>B1MLG8</accession>
<comment type="catalytic activity">
    <reaction evidence="1">
        <text>(4aS,6R)-4a-hydroxy-L-erythro-5,6,7,8-tetrahydrobiopterin = (6R)-L-erythro-6,7-dihydrobiopterin + H2O</text>
        <dbReference type="Rhea" id="RHEA:11920"/>
        <dbReference type="ChEBI" id="CHEBI:15377"/>
        <dbReference type="ChEBI" id="CHEBI:15642"/>
        <dbReference type="ChEBI" id="CHEBI:43120"/>
        <dbReference type="EC" id="4.2.1.96"/>
    </reaction>
</comment>
<comment type="similarity">
    <text evidence="1">Belongs to the pterin-4-alpha-carbinolamine dehydratase family.</text>
</comment>